<dbReference type="EC" id="5.6.1.7" evidence="1"/>
<dbReference type="EMBL" id="CP001661">
    <property type="protein sequence ID" value="ACT16318.1"/>
    <property type="molecule type" value="Genomic_DNA"/>
</dbReference>
<dbReference type="SMR" id="C6DY43"/>
<dbReference type="STRING" id="443144.GM21_0233"/>
<dbReference type="KEGG" id="gem:GM21_0233"/>
<dbReference type="eggNOG" id="COG0459">
    <property type="taxonomic scope" value="Bacteria"/>
</dbReference>
<dbReference type="HOGENOM" id="CLU_016503_3_0_7"/>
<dbReference type="OrthoDB" id="9766614at2"/>
<dbReference type="GO" id="GO:0005737">
    <property type="term" value="C:cytoplasm"/>
    <property type="evidence" value="ECO:0007669"/>
    <property type="project" value="UniProtKB-SubCell"/>
</dbReference>
<dbReference type="GO" id="GO:0005524">
    <property type="term" value="F:ATP binding"/>
    <property type="evidence" value="ECO:0007669"/>
    <property type="project" value="UniProtKB-UniRule"/>
</dbReference>
<dbReference type="GO" id="GO:0140662">
    <property type="term" value="F:ATP-dependent protein folding chaperone"/>
    <property type="evidence" value="ECO:0007669"/>
    <property type="project" value="InterPro"/>
</dbReference>
<dbReference type="GO" id="GO:0016853">
    <property type="term" value="F:isomerase activity"/>
    <property type="evidence" value="ECO:0007669"/>
    <property type="project" value="UniProtKB-KW"/>
</dbReference>
<dbReference type="GO" id="GO:0051082">
    <property type="term" value="F:unfolded protein binding"/>
    <property type="evidence" value="ECO:0007669"/>
    <property type="project" value="UniProtKB-UniRule"/>
</dbReference>
<dbReference type="GO" id="GO:0042026">
    <property type="term" value="P:protein refolding"/>
    <property type="evidence" value="ECO:0007669"/>
    <property type="project" value="UniProtKB-UniRule"/>
</dbReference>
<dbReference type="CDD" id="cd03344">
    <property type="entry name" value="GroEL"/>
    <property type="match status" value="1"/>
</dbReference>
<dbReference type="FunFam" id="1.10.560.10:FF:000001">
    <property type="entry name" value="60 kDa chaperonin"/>
    <property type="match status" value="1"/>
</dbReference>
<dbReference type="FunFam" id="3.50.7.10:FF:000001">
    <property type="entry name" value="60 kDa chaperonin"/>
    <property type="match status" value="1"/>
</dbReference>
<dbReference type="Gene3D" id="3.50.7.10">
    <property type="entry name" value="GroEL"/>
    <property type="match status" value="1"/>
</dbReference>
<dbReference type="Gene3D" id="1.10.560.10">
    <property type="entry name" value="GroEL-like equatorial domain"/>
    <property type="match status" value="1"/>
</dbReference>
<dbReference type="Gene3D" id="3.30.260.10">
    <property type="entry name" value="TCP-1-like chaperonin intermediate domain"/>
    <property type="match status" value="1"/>
</dbReference>
<dbReference type="HAMAP" id="MF_00600">
    <property type="entry name" value="CH60"/>
    <property type="match status" value="1"/>
</dbReference>
<dbReference type="InterPro" id="IPR018370">
    <property type="entry name" value="Chaperonin_Cpn60_CS"/>
</dbReference>
<dbReference type="InterPro" id="IPR001844">
    <property type="entry name" value="Cpn60/GroEL"/>
</dbReference>
<dbReference type="InterPro" id="IPR002423">
    <property type="entry name" value="Cpn60/GroEL/TCP-1"/>
</dbReference>
<dbReference type="InterPro" id="IPR027409">
    <property type="entry name" value="GroEL-like_apical_dom_sf"/>
</dbReference>
<dbReference type="InterPro" id="IPR027413">
    <property type="entry name" value="GROEL-like_equatorial_sf"/>
</dbReference>
<dbReference type="InterPro" id="IPR027410">
    <property type="entry name" value="TCP-1-like_intermed_sf"/>
</dbReference>
<dbReference type="NCBIfam" id="TIGR02348">
    <property type="entry name" value="GroEL"/>
    <property type="match status" value="1"/>
</dbReference>
<dbReference type="NCBIfam" id="NF000592">
    <property type="entry name" value="PRK00013.1"/>
    <property type="match status" value="1"/>
</dbReference>
<dbReference type="NCBIfam" id="NF009487">
    <property type="entry name" value="PRK12849.1"/>
    <property type="match status" value="1"/>
</dbReference>
<dbReference type="NCBIfam" id="NF009488">
    <property type="entry name" value="PRK12850.1"/>
    <property type="match status" value="1"/>
</dbReference>
<dbReference type="NCBIfam" id="NF009489">
    <property type="entry name" value="PRK12851.1"/>
    <property type="match status" value="1"/>
</dbReference>
<dbReference type="PANTHER" id="PTHR45633">
    <property type="entry name" value="60 KDA HEAT SHOCK PROTEIN, MITOCHONDRIAL"/>
    <property type="match status" value="1"/>
</dbReference>
<dbReference type="Pfam" id="PF00118">
    <property type="entry name" value="Cpn60_TCP1"/>
    <property type="match status" value="1"/>
</dbReference>
<dbReference type="PRINTS" id="PR00298">
    <property type="entry name" value="CHAPERONIN60"/>
</dbReference>
<dbReference type="SUPFAM" id="SSF52029">
    <property type="entry name" value="GroEL apical domain-like"/>
    <property type="match status" value="1"/>
</dbReference>
<dbReference type="SUPFAM" id="SSF48592">
    <property type="entry name" value="GroEL equatorial domain-like"/>
    <property type="match status" value="1"/>
</dbReference>
<dbReference type="SUPFAM" id="SSF54849">
    <property type="entry name" value="GroEL-intermediate domain like"/>
    <property type="match status" value="1"/>
</dbReference>
<dbReference type="PROSITE" id="PS00296">
    <property type="entry name" value="CHAPERONINS_CPN60"/>
    <property type="match status" value="1"/>
</dbReference>
<comment type="function">
    <text evidence="1">Together with its co-chaperonin GroES, plays an essential role in assisting protein folding. The GroEL-GroES system forms a nano-cage that allows encapsulation of the non-native substrate proteins and provides a physical environment optimized to promote and accelerate protein folding.</text>
</comment>
<comment type="catalytic activity">
    <reaction evidence="1">
        <text>ATP + H2O + a folded polypeptide = ADP + phosphate + an unfolded polypeptide.</text>
        <dbReference type="EC" id="5.6.1.7"/>
    </reaction>
</comment>
<comment type="subunit">
    <text evidence="1">Forms a cylinder of 14 subunits composed of two heptameric rings stacked back-to-back. Interacts with the co-chaperonin GroES.</text>
</comment>
<comment type="subcellular location">
    <subcellularLocation>
        <location evidence="1">Cytoplasm</location>
    </subcellularLocation>
</comment>
<comment type="similarity">
    <text evidence="1">Belongs to the chaperonin (HSP60) family.</text>
</comment>
<sequence>MAAKLIKFDQEARNCILKGVNTLADAVKVTLGPKGRNVVIEKSYGAPLITKDGVTVAKEIELEDKFENMGAQLVKEVASKTSDVAGDGTTTATVLAQAIYRQGAKLVAAGHNPMEIKRGLDQAVEALVAELKNISKPIKDHKEIAQVGTISANNDKTIGDIIAEAMEKVGKEGVITVEEAKAMETTLETVEGMQFDRGYLSPYFVTDPERMEAAMDNVAILIHDKKIANMKDLLPVLEQTAKSGRPLLIIAEDIEGEALATLVVNKLRGVLNVCAVKAPGFGDRRKAMLEDIAILTGGKVISEEVGFKLENTTLDMLGQAKKITVDKDNTTIIDGFGAEADIQGRVKMIRAQIDETSSDYDREKLQERLAKLVGGVAVIKVGAATEIEMKEKKARVEDALHATRAAVDEGIVPGGGVAYLRAMKVLENLQLAPEQQFGVNVIKRALEEPIRQISQNAGVDGSIVVDKVKNGKDAFGYNAADDVYVDMIEAGIIDPTKVSRSALQNAASVAGLMMTTEAMIADKPKEEGAMPAMPGGMGGMGGMGGMM</sequence>
<organism>
    <name type="scientific">Geobacter sp. (strain M21)</name>
    <dbReference type="NCBI Taxonomy" id="443144"/>
    <lineage>
        <taxon>Bacteria</taxon>
        <taxon>Pseudomonadati</taxon>
        <taxon>Thermodesulfobacteriota</taxon>
        <taxon>Desulfuromonadia</taxon>
        <taxon>Geobacterales</taxon>
        <taxon>Geobacteraceae</taxon>
        <taxon>Geobacter</taxon>
    </lineage>
</organism>
<keyword id="KW-0067">ATP-binding</keyword>
<keyword id="KW-0143">Chaperone</keyword>
<keyword id="KW-0963">Cytoplasm</keyword>
<keyword id="KW-0413">Isomerase</keyword>
<keyword id="KW-0547">Nucleotide-binding</keyword>
<protein>
    <recommendedName>
        <fullName evidence="1">Chaperonin GroEL</fullName>
        <ecNumber evidence="1">5.6.1.7</ecNumber>
    </recommendedName>
    <alternativeName>
        <fullName evidence="1">60 kDa chaperonin</fullName>
    </alternativeName>
    <alternativeName>
        <fullName evidence="1">Chaperonin-60</fullName>
        <shortName evidence="1">Cpn60</shortName>
    </alternativeName>
</protein>
<reference key="1">
    <citation type="submission" date="2009-07" db="EMBL/GenBank/DDBJ databases">
        <title>Complete sequence of Geobacter sp. M21.</title>
        <authorList>
            <consortium name="US DOE Joint Genome Institute"/>
            <person name="Lucas S."/>
            <person name="Copeland A."/>
            <person name="Lapidus A."/>
            <person name="Glavina del Rio T."/>
            <person name="Dalin E."/>
            <person name="Tice H."/>
            <person name="Bruce D."/>
            <person name="Goodwin L."/>
            <person name="Pitluck S."/>
            <person name="Saunders E."/>
            <person name="Brettin T."/>
            <person name="Detter J.C."/>
            <person name="Han C."/>
            <person name="Larimer F."/>
            <person name="Land M."/>
            <person name="Hauser L."/>
            <person name="Kyrpides N."/>
            <person name="Ovchinnikova G."/>
            <person name="Lovley D."/>
        </authorList>
    </citation>
    <scope>NUCLEOTIDE SEQUENCE [LARGE SCALE GENOMIC DNA]</scope>
    <source>
        <strain>M21</strain>
    </source>
</reference>
<name>CH60_GEOSM</name>
<feature type="chain" id="PRO_1000212201" description="Chaperonin GroEL">
    <location>
        <begin position="1"/>
        <end position="547"/>
    </location>
</feature>
<feature type="binding site" evidence="1">
    <location>
        <begin position="30"/>
        <end position="33"/>
    </location>
    <ligand>
        <name>ATP</name>
        <dbReference type="ChEBI" id="CHEBI:30616"/>
    </ligand>
</feature>
<feature type="binding site" evidence="1">
    <location>
        <position position="51"/>
    </location>
    <ligand>
        <name>ATP</name>
        <dbReference type="ChEBI" id="CHEBI:30616"/>
    </ligand>
</feature>
<feature type="binding site" evidence="1">
    <location>
        <begin position="87"/>
        <end position="91"/>
    </location>
    <ligand>
        <name>ATP</name>
        <dbReference type="ChEBI" id="CHEBI:30616"/>
    </ligand>
</feature>
<feature type="binding site" evidence="1">
    <location>
        <position position="415"/>
    </location>
    <ligand>
        <name>ATP</name>
        <dbReference type="ChEBI" id="CHEBI:30616"/>
    </ligand>
</feature>
<feature type="binding site" evidence="1">
    <location>
        <begin position="478"/>
        <end position="480"/>
    </location>
    <ligand>
        <name>ATP</name>
        <dbReference type="ChEBI" id="CHEBI:30616"/>
    </ligand>
</feature>
<feature type="binding site" evidence="1">
    <location>
        <position position="494"/>
    </location>
    <ligand>
        <name>ATP</name>
        <dbReference type="ChEBI" id="CHEBI:30616"/>
    </ligand>
</feature>
<gene>
    <name evidence="1" type="primary">groEL</name>
    <name evidence="1" type="synonym">groL</name>
    <name type="ordered locus">GM21_0233</name>
</gene>
<proteinExistence type="inferred from homology"/>
<evidence type="ECO:0000255" key="1">
    <source>
        <dbReference type="HAMAP-Rule" id="MF_00600"/>
    </source>
</evidence>
<accession>C6DY43</accession>